<reference key="1">
    <citation type="journal article" date="2005" name="J. Bacteriol.">
        <title>Whole-genome sequence analysis of Pseudomonas syringae pv. phaseolicola 1448A reveals divergence among pathovars in genes involved in virulence and transposition.</title>
        <authorList>
            <person name="Joardar V."/>
            <person name="Lindeberg M."/>
            <person name="Jackson R.W."/>
            <person name="Selengut J."/>
            <person name="Dodson R."/>
            <person name="Brinkac L.M."/>
            <person name="Daugherty S.C."/>
            <person name="DeBoy R.T."/>
            <person name="Durkin A.S."/>
            <person name="Gwinn Giglio M."/>
            <person name="Madupu R."/>
            <person name="Nelson W.C."/>
            <person name="Rosovitz M.J."/>
            <person name="Sullivan S.A."/>
            <person name="Crabtree J."/>
            <person name="Creasy T."/>
            <person name="Davidsen T.M."/>
            <person name="Haft D.H."/>
            <person name="Zafar N."/>
            <person name="Zhou L."/>
            <person name="Halpin R."/>
            <person name="Holley T."/>
            <person name="Khouri H.M."/>
            <person name="Feldblyum T.V."/>
            <person name="White O."/>
            <person name="Fraser C.M."/>
            <person name="Chatterjee A.K."/>
            <person name="Cartinhour S."/>
            <person name="Schneider D."/>
            <person name="Mansfield J.W."/>
            <person name="Collmer A."/>
            <person name="Buell R."/>
        </authorList>
    </citation>
    <scope>NUCLEOTIDE SEQUENCE [LARGE SCALE GENOMIC DNA]</scope>
    <source>
        <strain>1448A / Race 6</strain>
    </source>
</reference>
<protein>
    <recommendedName>
        <fullName evidence="1">Protein nucleotidyltransferase YdiU</fullName>
        <ecNumber evidence="1">2.7.7.-</ecNumber>
    </recommendedName>
    <alternativeName>
        <fullName evidence="1">Protein adenylyltransferase YdiU</fullName>
        <ecNumber evidence="1">2.7.7.108</ecNumber>
    </alternativeName>
    <alternativeName>
        <fullName evidence="1">Protein uridylyltransferase YdiU</fullName>
        <ecNumber evidence="1">2.7.7.-</ecNumber>
    </alternativeName>
</protein>
<comment type="function">
    <text evidence="1">Nucleotidyltransferase involved in the post-translational modification of proteins. It can catalyze the addition of adenosine monophosphate (AMP) or uridine monophosphate (UMP) to a protein, resulting in modifications known as AMPylation and UMPylation.</text>
</comment>
<comment type="catalytic activity">
    <reaction evidence="1">
        <text>L-seryl-[protein] + ATP = 3-O-(5'-adenylyl)-L-seryl-[protein] + diphosphate</text>
        <dbReference type="Rhea" id="RHEA:58120"/>
        <dbReference type="Rhea" id="RHEA-COMP:9863"/>
        <dbReference type="Rhea" id="RHEA-COMP:15073"/>
        <dbReference type="ChEBI" id="CHEBI:29999"/>
        <dbReference type="ChEBI" id="CHEBI:30616"/>
        <dbReference type="ChEBI" id="CHEBI:33019"/>
        <dbReference type="ChEBI" id="CHEBI:142516"/>
        <dbReference type="EC" id="2.7.7.108"/>
    </reaction>
</comment>
<comment type="catalytic activity">
    <reaction evidence="1">
        <text>L-threonyl-[protein] + ATP = 3-O-(5'-adenylyl)-L-threonyl-[protein] + diphosphate</text>
        <dbReference type="Rhea" id="RHEA:54292"/>
        <dbReference type="Rhea" id="RHEA-COMP:11060"/>
        <dbReference type="Rhea" id="RHEA-COMP:13847"/>
        <dbReference type="ChEBI" id="CHEBI:30013"/>
        <dbReference type="ChEBI" id="CHEBI:30616"/>
        <dbReference type="ChEBI" id="CHEBI:33019"/>
        <dbReference type="ChEBI" id="CHEBI:138113"/>
        <dbReference type="EC" id="2.7.7.108"/>
    </reaction>
</comment>
<comment type="catalytic activity">
    <reaction evidence="1">
        <text>L-tyrosyl-[protein] + ATP = O-(5'-adenylyl)-L-tyrosyl-[protein] + diphosphate</text>
        <dbReference type="Rhea" id="RHEA:54288"/>
        <dbReference type="Rhea" id="RHEA-COMP:10136"/>
        <dbReference type="Rhea" id="RHEA-COMP:13846"/>
        <dbReference type="ChEBI" id="CHEBI:30616"/>
        <dbReference type="ChEBI" id="CHEBI:33019"/>
        <dbReference type="ChEBI" id="CHEBI:46858"/>
        <dbReference type="ChEBI" id="CHEBI:83624"/>
        <dbReference type="EC" id="2.7.7.108"/>
    </reaction>
</comment>
<comment type="catalytic activity">
    <reaction evidence="1">
        <text>L-histidyl-[protein] + UTP = N(tele)-(5'-uridylyl)-L-histidyl-[protein] + diphosphate</text>
        <dbReference type="Rhea" id="RHEA:83891"/>
        <dbReference type="Rhea" id="RHEA-COMP:9745"/>
        <dbReference type="Rhea" id="RHEA-COMP:20239"/>
        <dbReference type="ChEBI" id="CHEBI:29979"/>
        <dbReference type="ChEBI" id="CHEBI:33019"/>
        <dbReference type="ChEBI" id="CHEBI:46398"/>
        <dbReference type="ChEBI" id="CHEBI:233474"/>
    </reaction>
</comment>
<comment type="catalytic activity">
    <reaction evidence="1">
        <text>L-seryl-[protein] + UTP = O-(5'-uridylyl)-L-seryl-[protein] + diphosphate</text>
        <dbReference type="Rhea" id="RHEA:64604"/>
        <dbReference type="Rhea" id="RHEA-COMP:9863"/>
        <dbReference type="Rhea" id="RHEA-COMP:16635"/>
        <dbReference type="ChEBI" id="CHEBI:29999"/>
        <dbReference type="ChEBI" id="CHEBI:33019"/>
        <dbReference type="ChEBI" id="CHEBI:46398"/>
        <dbReference type="ChEBI" id="CHEBI:156051"/>
    </reaction>
</comment>
<comment type="catalytic activity">
    <reaction evidence="1">
        <text>L-tyrosyl-[protein] + UTP = O-(5'-uridylyl)-L-tyrosyl-[protein] + diphosphate</text>
        <dbReference type="Rhea" id="RHEA:83887"/>
        <dbReference type="Rhea" id="RHEA-COMP:10136"/>
        <dbReference type="Rhea" id="RHEA-COMP:20238"/>
        <dbReference type="ChEBI" id="CHEBI:33019"/>
        <dbReference type="ChEBI" id="CHEBI:46398"/>
        <dbReference type="ChEBI" id="CHEBI:46858"/>
        <dbReference type="ChEBI" id="CHEBI:90602"/>
    </reaction>
</comment>
<comment type="cofactor">
    <cofactor evidence="1">
        <name>Mg(2+)</name>
        <dbReference type="ChEBI" id="CHEBI:18420"/>
    </cofactor>
    <cofactor evidence="1">
        <name>Mn(2+)</name>
        <dbReference type="ChEBI" id="CHEBI:29035"/>
    </cofactor>
</comment>
<comment type="similarity">
    <text evidence="1">Belongs to the SELO family.</text>
</comment>
<evidence type="ECO:0000255" key="1">
    <source>
        <dbReference type="HAMAP-Rule" id="MF_00692"/>
    </source>
</evidence>
<feature type="chain" id="PRO_0000271848" description="Protein nucleotidyltransferase YdiU">
    <location>
        <begin position="1"/>
        <end position="487"/>
    </location>
</feature>
<feature type="active site" description="Proton acceptor" evidence="1">
    <location>
        <position position="252"/>
    </location>
</feature>
<feature type="binding site" evidence="1">
    <location>
        <position position="90"/>
    </location>
    <ligand>
        <name>ATP</name>
        <dbReference type="ChEBI" id="CHEBI:30616"/>
    </ligand>
</feature>
<feature type="binding site" evidence="1">
    <location>
        <position position="92"/>
    </location>
    <ligand>
        <name>ATP</name>
        <dbReference type="ChEBI" id="CHEBI:30616"/>
    </ligand>
</feature>
<feature type="binding site" evidence="1">
    <location>
        <position position="93"/>
    </location>
    <ligand>
        <name>ATP</name>
        <dbReference type="ChEBI" id="CHEBI:30616"/>
    </ligand>
</feature>
<feature type="binding site" evidence="1">
    <location>
        <position position="113"/>
    </location>
    <ligand>
        <name>ATP</name>
        <dbReference type="ChEBI" id="CHEBI:30616"/>
    </ligand>
</feature>
<feature type="binding site" evidence="1">
    <location>
        <position position="125"/>
    </location>
    <ligand>
        <name>ATP</name>
        <dbReference type="ChEBI" id="CHEBI:30616"/>
    </ligand>
</feature>
<feature type="binding site" evidence="1">
    <location>
        <position position="126"/>
    </location>
    <ligand>
        <name>ATP</name>
        <dbReference type="ChEBI" id="CHEBI:30616"/>
    </ligand>
</feature>
<feature type="binding site" evidence="1">
    <location>
        <position position="176"/>
    </location>
    <ligand>
        <name>ATP</name>
        <dbReference type="ChEBI" id="CHEBI:30616"/>
    </ligand>
</feature>
<feature type="binding site" evidence="1">
    <location>
        <position position="183"/>
    </location>
    <ligand>
        <name>ATP</name>
        <dbReference type="ChEBI" id="CHEBI:30616"/>
    </ligand>
</feature>
<feature type="binding site" evidence="1">
    <location>
        <position position="253"/>
    </location>
    <ligand>
        <name>Mg(2+)</name>
        <dbReference type="ChEBI" id="CHEBI:18420"/>
    </ligand>
</feature>
<feature type="binding site" evidence="1">
    <location>
        <position position="262"/>
    </location>
    <ligand>
        <name>ATP</name>
        <dbReference type="ChEBI" id="CHEBI:30616"/>
    </ligand>
</feature>
<feature type="binding site" evidence="1">
    <location>
        <position position="262"/>
    </location>
    <ligand>
        <name>Mg(2+)</name>
        <dbReference type="ChEBI" id="CHEBI:18420"/>
    </ligand>
</feature>
<keyword id="KW-0067">ATP-binding</keyword>
<keyword id="KW-0460">Magnesium</keyword>
<keyword id="KW-0464">Manganese</keyword>
<keyword id="KW-0479">Metal-binding</keyword>
<keyword id="KW-0547">Nucleotide-binding</keyword>
<keyword id="KW-0548">Nucleotidyltransferase</keyword>
<keyword id="KW-0808">Transferase</keyword>
<organism>
    <name type="scientific">Pseudomonas savastanoi pv. phaseolicola (strain 1448A / Race 6)</name>
    <name type="common">Pseudomonas syringae pv. phaseolicola (strain 1448A / Race 6)</name>
    <dbReference type="NCBI Taxonomy" id="264730"/>
    <lineage>
        <taxon>Bacteria</taxon>
        <taxon>Pseudomonadati</taxon>
        <taxon>Pseudomonadota</taxon>
        <taxon>Gammaproteobacteria</taxon>
        <taxon>Pseudomonadales</taxon>
        <taxon>Pseudomonadaceae</taxon>
        <taxon>Pseudomonas</taxon>
    </lineage>
</organism>
<name>SELO_PSE14</name>
<sequence>MKALDELIFDNRFARLGDAFSTSVLSEPIETPRLVVASQSALALLDLAPEQADLPLFAEIFSGHKLWSEAEPRAMVYSGHQFGSYNPRLGDGRGLLLGEAYNDAGEHWDLHLKGAGRTPYSRMGDGRAVLRSSIREFLASEALHALGIPSSRAGCVVSSSTPVWRETQEHAAMVLRLAQSHVRFGSLEYFFYTKQPEQLKTLAEHVLTMHYPHCQEQPEPYLAMFREIVERNAELIAKWQAYGFCHGVMNTDNMSILGITFDFGPFAFLDDFDEHFICNHSDHEGRYSFSNQVPIAQWNLSALAQALTPFISVEALRETIGLFLPLYQAHYLDLMRRRLGLTIAQEQDEQLVSQLLKLMQNSGVDYTLFFRRLGDQPAAEALRTLRDDFVDIKGFDGWAEAYLARIAGEGKGTEQERQTRMHAVNPLYILRNYLAQNAIAAAEKGDYAEVRRLHQVLCTPFTEQPGMEGYAQRPPDWGKHLEISCSS</sequence>
<gene>
    <name evidence="1" type="primary">ydiU</name>
    <name evidence="1" type="synonym">selO</name>
    <name type="ordered locus">PSPPH_0485</name>
</gene>
<dbReference type="EC" id="2.7.7.-" evidence="1"/>
<dbReference type="EC" id="2.7.7.108" evidence="1"/>
<dbReference type="EMBL" id="CP000058">
    <property type="protein sequence ID" value="AAZ36115.1"/>
    <property type="molecule type" value="Genomic_DNA"/>
</dbReference>
<dbReference type="RefSeq" id="WP_011167503.1">
    <property type="nucleotide sequence ID" value="NC_005773.3"/>
</dbReference>
<dbReference type="SMR" id="Q48P81"/>
<dbReference type="KEGG" id="psp:PSPPH_0485"/>
<dbReference type="eggNOG" id="COG0397">
    <property type="taxonomic scope" value="Bacteria"/>
</dbReference>
<dbReference type="HOGENOM" id="CLU_010245_4_0_6"/>
<dbReference type="Proteomes" id="UP000000551">
    <property type="component" value="Chromosome"/>
</dbReference>
<dbReference type="GO" id="GO:0070733">
    <property type="term" value="F:AMPylase activity"/>
    <property type="evidence" value="ECO:0007669"/>
    <property type="project" value="TreeGrafter"/>
</dbReference>
<dbReference type="GO" id="GO:0005524">
    <property type="term" value="F:ATP binding"/>
    <property type="evidence" value="ECO:0007669"/>
    <property type="project" value="UniProtKB-UniRule"/>
</dbReference>
<dbReference type="GO" id="GO:0000287">
    <property type="term" value="F:magnesium ion binding"/>
    <property type="evidence" value="ECO:0007669"/>
    <property type="project" value="UniProtKB-UniRule"/>
</dbReference>
<dbReference type="HAMAP" id="MF_00692">
    <property type="entry name" value="YdiU_SelO"/>
    <property type="match status" value="1"/>
</dbReference>
<dbReference type="InterPro" id="IPR003846">
    <property type="entry name" value="SelO"/>
</dbReference>
<dbReference type="NCBIfam" id="NF000658">
    <property type="entry name" value="PRK00029.1"/>
    <property type="match status" value="1"/>
</dbReference>
<dbReference type="NCBIfam" id="NF045949">
    <property type="entry name" value="PrtAdtaseSelOPseudom"/>
    <property type="match status" value="1"/>
</dbReference>
<dbReference type="PANTHER" id="PTHR32057">
    <property type="entry name" value="PROTEIN ADENYLYLTRANSFERASE SELO, MITOCHONDRIAL"/>
    <property type="match status" value="1"/>
</dbReference>
<dbReference type="PANTHER" id="PTHR32057:SF14">
    <property type="entry name" value="PROTEIN ADENYLYLTRANSFERASE SELO, MITOCHONDRIAL"/>
    <property type="match status" value="1"/>
</dbReference>
<dbReference type="Pfam" id="PF02696">
    <property type="entry name" value="SelO"/>
    <property type="match status" value="1"/>
</dbReference>
<proteinExistence type="inferred from homology"/>
<accession>Q48P81</accession>